<name>PURA_LEUMM</name>
<reference key="1">
    <citation type="journal article" date="2006" name="Proc. Natl. Acad. Sci. U.S.A.">
        <title>Comparative genomics of the lactic acid bacteria.</title>
        <authorList>
            <person name="Makarova K.S."/>
            <person name="Slesarev A."/>
            <person name="Wolf Y.I."/>
            <person name="Sorokin A."/>
            <person name="Mirkin B."/>
            <person name="Koonin E.V."/>
            <person name="Pavlov A."/>
            <person name="Pavlova N."/>
            <person name="Karamychev V."/>
            <person name="Polouchine N."/>
            <person name="Shakhova V."/>
            <person name="Grigoriev I."/>
            <person name="Lou Y."/>
            <person name="Rohksar D."/>
            <person name="Lucas S."/>
            <person name="Huang K."/>
            <person name="Goodstein D.M."/>
            <person name="Hawkins T."/>
            <person name="Plengvidhya V."/>
            <person name="Welker D."/>
            <person name="Hughes J."/>
            <person name="Goh Y."/>
            <person name="Benson A."/>
            <person name="Baldwin K."/>
            <person name="Lee J.-H."/>
            <person name="Diaz-Muniz I."/>
            <person name="Dosti B."/>
            <person name="Smeianov V."/>
            <person name="Wechter W."/>
            <person name="Barabote R."/>
            <person name="Lorca G."/>
            <person name="Altermann E."/>
            <person name="Barrangou R."/>
            <person name="Ganesan B."/>
            <person name="Xie Y."/>
            <person name="Rawsthorne H."/>
            <person name="Tamir D."/>
            <person name="Parker C."/>
            <person name="Breidt F."/>
            <person name="Broadbent J.R."/>
            <person name="Hutkins R."/>
            <person name="O'Sullivan D."/>
            <person name="Steele J."/>
            <person name="Unlu G."/>
            <person name="Saier M.H. Jr."/>
            <person name="Klaenhammer T."/>
            <person name="Richardson P."/>
            <person name="Kozyavkin S."/>
            <person name="Weimer B.C."/>
            <person name="Mills D.A."/>
        </authorList>
    </citation>
    <scope>NUCLEOTIDE SEQUENCE [LARGE SCALE GENOMIC DNA]</scope>
    <source>
        <strain>ATCC 8293 / DSM 20343 / BCRC 11652 / CCM 1803 / JCM 6124 / NCDO 523 / NBRC 100496 / NCIMB 8023 / NCTC 12954 / NRRL B-1118 / 37Y</strain>
    </source>
</reference>
<gene>
    <name evidence="1" type="primary">purA</name>
    <name type="ordered locus">LEUM_1460</name>
</gene>
<proteinExistence type="inferred from homology"/>
<dbReference type="EC" id="6.3.4.4" evidence="1"/>
<dbReference type="EMBL" id="CP000414">
    <property type="protein sequence ID" value="ABJ62553.1"/>
    <property type="molecule type" value="Genomic_DNA"/>
</dbReference>
<dbReference type="RefSeq" id="WP_011680143.1">
    <property type="nucleotide sequence ID" value="NC_008531.1"/>
</dbReference>
<dbReference type="SMR" id="Q03W69"/>
<dbReference type="EnsemblBacteria" id="ABJ62553">
    <property type="protein sequence ID" value="ABJ62553"/>
    <property type="gene ID" value="LEUM_1460"/>
</dbReference>
<dbReference type="GeneID" id="29577091"/>
<dbReference type="KEGG" id="lme:LEUM_1460"/>
<dbReference type="eggNOG" id="COG0104">
    <property type="taxonomic scope" value="Bacteria"/>
</dbReference>
<dbReference type="HOGENOM" id="CLU_029848_0_0_9"/>
<dbReference type="UniPathway" id="UPA00075">
    <property type="reaction ID" value="UER00335"/>
</dbReference>
<dbReference type="Proteomes" id="UP000000362">
    <property type="component" value="Chromosome"/>
</dbReference>
<dbReference type="GO" id="GO:0005737">
    <property type="term" value="C:cytoplasm"/>
    <property type="evidence" value="ECO:0007669"/>
    <property type="project" value="UniProtKB-SubCell"/>
</dbReference>
<dbReference type="GO" id="GO:0004019">
    <property type="term" value="F:adenylosuccinate synthase activity"/>
    <property type="evidence" value="ECO:0007669"/>
    <property type="project" value="UniProtKB-UniRule"/>
</dbReference>
<dbReference type="GO" id="GO:0005525">
    <property type="term" value="F:GTP binding"/>
    <property type="evidence" value="ECO:0007669"/>
    <property type="project" value="UniProtKB-UniRule"/>
</dbReference>
<dbReference type="GO" id="GO:0000287">
    <property type="term" value="F:magnesium ion binding"/>
    <property type="evidence" value="ECO:0007669"/>
    <property type="project" value="UniProtKB-UniRule"/>
</dbReference>
<dbReference type="GO" id="GO:0044208">
    <property type="term" value="P:'de novo' AMP biosynthetic process"/>
    <property type="evidence" value="ECO:0007669"/>
    <property type="project" value="UniProtKB-UniRule"/>
</dbReference>
<dbReference type="GO" id="GO:0046040">
    <property type="term" value="P:IMP metabolic process"/>
    <property type="evidence" value="ECO:0007669"/>
    <property type="project" value="TreeGrafter"/>
</dbReference>
<dbReference type="CDD" id="cd03108">
    <property type="entry name" value="AdSS"/>
    <property type="match status" value="1"/>
</dbReference>
<dbReference type="FunFam" id="1.10.300.10:FF:000001">
    <property type="entry name" value="Adenylosuccinate synthetase"/>
    <property type="match status" value="1"/>
</dbReference>
<dbReference type="FunFam" id="3.90.170.10:FF:000001">
    <property type="entry name" value="Adenylosuccinate synthetase"/>
    <property type="match status" value="1"/>
</dbReference>
<dbReference type="Gene3D" id="3.40.440.10">
    <property type="entry name" value="Adenylosuccinate Synthetase, subunit A, domain 1"/>
    <property type="match status" value="1"/>
</dbReference>
<dbReference type="Gene3D" id="1.10.300.10">
    <property type="entry name" value="Adenylosuccinate Synthetase, subunit A, domain 2"/>
    <property type="match status" value="1"/>
</dbReference>
<dbReference type="Gene3D" id="3.90.170.10">
    <property type="entry name" value="Adenylosuccinate Synthetase, subunit A, domain 3"/>
    <property type="match status" value="1"/>
</dbReference>
<dbReference type="HAMAP" id="MF_00011">
    <property type="entry name" value="Adenylosucc_synth"/>
    <property type="match status" value="1"/>
</dbReference>
<dbReference type="InterPro" id="IPR018220">
    <property type="entry name" value="Adenylosuccin_syn_GTP-bd"/>
</dbReference>
<dbReference type="InterPro" id="IPR033128">
    <property type="entry name" value="Adenylosuccin_syn_Lys_AS"/>
</dbReference>
<dbReference type="InterPro" id="IPR042109">
    <property type="entry name" value="Adenylosuccinate_synth_dom1"/>
</dbReference>
<dbReference type="InterPro" id="IPR042110">
    <property type="entry name" value="Adenylosuccinate_synth_dom2"/>
</dbReference>
<dbReference type="InterPro" id="IPR042111">
    <property type="entry name" value="Adenylosuccinate_synth_dom3"/>
</dbReference>
<dbReference type="InterPro" id="IPR001114">
    <property type="entry name" value="Adenylosuccinate_synthetase"/>
</dbReference>
<dbReference type="InterPro" id="IPR027417">
    <property type="entry name" value="P-loop_NTPase"/>
</dbReference>
<dbReference type="NCBIfam" id="NF002223">
    <property type="entry name" value="PRK01117.1"/>
    <property type="match status" value="1"/>
</dbReference>
<dbReference type="NCBIfam" id="TIGR00184">
    <property type="entry name" value="purA"/>
    <property type="match status" value="1"/>
</dbReference>
<dbReference type="PANTHER" id="PTHR11846">
    <property type="entry name" value="ADENYLOSUCCINATE SYNTHETASE"/>
    <property type="match status" value="1"/>
</dbReference>
<dbReference type="PANTHER" id="PTHR11846:SF0">
    <property type="entry name" value="ADENYLOSUCCINATE SYNTHETASE"/>
    <property type="match status" value="1"/>
</dbReference>
<dbReference type="Pfam" id="PF00709">
    <property type="entry name" value="Adenylsucc_synt"/>
    <property type="match status" value="1"/>
</dbReference>
<dbReference type="SMART" id="SM00788">
    <property type="entry name" value="Adenylsucc_synt"/>
    <property type="match status" value="1"/>
</dbReference>
<dbReference type="SUPFAM" id="SSF52540">
    <property type="entry name" value="P-loop containing nucleoside triphosphate hydrolases"/>
    <property type="match status" value="1"/>
</dbReference>
<dbReference type="PROSITE" id="PS01266">
    <property type="entry name" value="ADENYLOSUCCIN_SYN_1"/>
    <property type="match status" value="1"/>
</dbReference>
<dbReference type="PROSITE" id="PS00513">
    <property type="entry name" value="ADENYLOSUCCIN_SYN_2"/>
    <property type="match status" value="1"/>
</dbReference>
<sequence>MSGVIVVGSQWGDEGKGKIVDFFAEHADAVVRYQGGNNAGHTIWHGDTKFELSALPSGIVTKGQLAILGNGVVINPEALLAEIKEVESQGVTVENLIISNRAHVIMPYHIALDKASETASNNRIGTTKKGIGPAYTDKISRVGIRVADLIDPEIFGKLLKEYLPFKNAQLTKLYGEEALDYNEIYDKYVEYGRQLAPYVTDTSYLLGQQMKENKRVVFEGAQGVMLDVDHGTYPFVTSSNPTAGGVMNGAGVGPKQIQDVVGVIKAYTSRVGSGPFPTELFNDTADHIREIGHEYGVVTKRPRRIGWLDAVALRHAVQVSGLTKLAINSLDVLSGLKEVKIATSYTYKGEEIHHFPASDTWFQGLDVNFETLPGWDEDITDVTKFDELPINAQNYLKRISELLEVDLLSFAVGPKPEQTHLLRPVWE</sequence>
<accession>Q03W69</accession>
<comment type="function">
    <text evidence="1">Plays an important role in the de novo pathway of purine nucleotide biosynthesis. Catalyzes the first committed step in the biosynthesis of AMP from IMP.</text>
</comment>
<comment type="catalytic activity">
    <reaction evidence="1">
        <text>IMP + L-aspartate + GTP = N(6)-(1,2-dicarboxyethyl)-AMP + GDP + phosphate + 2 H(+)</text>
        <dbReference type="Rhea" id="RHEA:15753"/>
        <dbReference type="ChEBI" id="CHEBI:15378"/>
        <dbReference type="ChEBI" id="CHEBI:29991"/>
        <dbReference type="ChEBI" id="CHEBI:37565"/>
        <dbReference type="ChEBI" id="CHEBI:43474"/>
        <dbReference type="ChEBI" id="CHEBI:57567"/>
        <dbReference type="ChEBI" id="CHEBI:58053"/>
        <dbReference type="ChEBI" id="CHEBI:58189"/>
        <dbReference type="EC" id="6.3.4.4"/>
    </reaction>
</comment>
<comment type="cofactor">
    <cofactor evidence="1">
        <name>Mg(2+)</name>
        <dbReference type="ChEBI" id="CHEBI:18420"/>
    </cofactor>
    <text evidence="1">Binds 1 Mg(2+) ion per subunit.</text>
</comment>
<comment type="pathway">
    <text evidence="1">Purine metabolism; AMP biosynthesis via de novo pathway; AMP from IMP: step 1/2.</text>
</comment>
<comment type="subunit">
    <text evidence="1">Homodimer.</text>
</comment>
<comment type="subcellular location">
    <subcellularLocation>
        <location evidence="1">Cytoplasm</location>
    </subcellularLocation>
</comment>
<comment type="similarity">
    <text evidence="1">Belongs to the adenylosuccinate synthetase family.</text>
</comment>
<evidence type="ECO:0000255" key="1">
    <source>
        <dbReference type="HAMAP-Rule" id="MF_00011"/>
    </source>
</evidence>
<keyword id="KW-0963">Cytoplasm</keyword>
<keyword id="KW-0342">GTP-binding</keyword>
<keyword id="KW-0436">Ligase</keyword>
<keyword id="KW-0460">Magnesium</keyword>
<keyword id="KW-0479">Metal-binding</keyword>
<keyword id="KW-0547">Nucleotide-binding</keyword>
<keyword id="KW-0658">Purine biosynthesis</keyword>
<keyword id="KW-1185">Reference proteome</keyword>
<feature type="chain" id="PRO_1000000850" description="Adenylosuccinate synthetase">
    <location>
        <begin position="1"/>
        <end position="427"/>
    </location>
</feature>
<feature type="active site" description="Proton acceptor" evidence="1">
    <location>
        <position position="13"/>
    </location>
</feature>
<feature type="active site" description="Proton donor" evidence="1">
    <location>
        <position position="41"/>
    </location>
</feature>
<feature type="binding site" evidence="1">
    <location>
        <begin position="12"/>
        <end position="18"/>
    </location>
    <ligand>
        <name>GTP</name>
        <dbReference type="ChEBI" id="CHEBI:37565"/>
    </ligand>
</feature>
<feature type="binding site" description="in other chain" evidence="1">
    <location>
        <begin position="13"/>
        <end position="16"/>
    </location>
    <ligand>
        <name>IMP</name>
        <dbReference type="ChEBI" id="CHEBI:58053"/>
        <note>ligand shared between dimeric partners</note>
    </ligand>
</feature>
<feature type="binding site" evidence="1">
    <location>
        <position position="13"/>
    </location>
    <ligand>
        <name>Mg(2+)</name>
        <dbReference type="ChEBI" id="CHEBI:18420"/>
    </ligand>
</feature>
<feature type="binding site" description="in other chain" evidence="1">
    <location>
        <begin position="38"/>
        <end position="41"/>
    </location>
    <ligand>
        <name>IMP</name>
        <dbReference type="ChEBI" id="CHEBI:58053"/>
        <note>ligand shared between dimeric partners</note>
    </ligand>
</feature>
<feature type="binding site" evidence="1">
    <location>
        <begin position="40"/>
        <end position="42"/>
    </location>
    <ligand>
        <name>GTP</name>
        <dbReference type="ChEBI" id="CHEBI:37565"/>
    </ligand>
</feature>
<feature type="binding site" evidence="1">
    <location>
        <position position="40"/>
    </location>
    <ligand>
        <name>Mg(2+)</name>
        <dbReference type="ChEBI" id="CHEBI:18420"/>
    </ligand>
</feature>
<feature type="binding site" description="in other chain" evidence="1">
    <location>
        <position position="127"/>
    </location>
    <ligand>
        <name>IMP</name>
        <dbReference type="ChEBI" id="CHEBI:58053"/>
        <note>ligand shared between dimeric partners</note>
    </ligand>
</feature>
<feature type="binding site" evidence="1">
    <location>
        <position position="141"/>
    </location>
    <ligand>
        <name>IMP</name>
        <dbReference type="ChEBI" id="CHEBI:58053"/>
        <note>ligand shared between dimeric partners</note>
    </ligand>
</feature>
<feature type="binding site" description="in other chain" evidence="1">
    <location>
        <position position="222"/>
    </location>
    <ligand>
        <name>IMP</name>
        <dbReference type="ChEBI" id="CHEBI:58053"/>
        <note>ligand shared between dimeric partners</note>
    </ligand>
</feature>
<feature type="binding site" description="in other chain" evidence="1">
    <location>
        <position position="237"/>
    </location>
    <ligand>
        <name>IMP</name>
        <dbReference type="ChEBI" id="CHEBI:58053"/>
        <note>ligand shared between dimeric partners</note>
    </ligand>
</feature>
<feature type="binding site" evidence="1">
    <location>
        <begin position="297"/>
        <end position="303"/>
    </location>
    <ligand>
        <name>substrate</name>
    </ligand>
</feature>
<feature type="binding site" description="in other chain" evidence="1">
    <location>
        <position position="301"/>
    </location>
    <ligand>
        <name>IMP</name>
        <dbReference type="ChEBI" id="CHEBI:58053"/>
        <note>ligand shared between dimeric partners</note>
    </ligand>
</feature>
<feature type="binding site" evidence="1">
    <location>
        <position position="303"/>
    </location>
    <ligand>
        <name>GTP</name>
        <dbReference type="ChEBI" id="CHEBI:37565"/>
    </ligand>
</feature>
<feature type="binding site" evidence="1">
    <location>
        <begin position="329"/>
        <end position="331"/>
    </location>
    <ligand>
        <name>GTP</name>
        <dbReference type="ChEBI" id="CHEBI:37565"/>
    </ligand>
</feature>
<feature type="binding site" evidence="1">
    <location>
        <begin position="411"/>
        <end position="413"/>
    </location>
    <ligand>
        <name>GTP</name>
        <dbReference type="ChEBI" id="CHEBI:37565"/>
    </ligand>
</feature>
<protein>
    <recommendedName>
        <fullName evidence="1">Adenylosuccinate synthetase</fullName>
        <shortName evidence="1">AMPSase</shortName>
        <shortName evidence="1">AdSS</shortName>
        <ecNumber evidence="1">6.3.4.4</ecNumber>
    </recommendedName>
    <alternativeName>
        <fullName evidence="1">IMP--aspartate ligase</fullName>
    </alternativeName>
</protein>
<organism>
    <name type="scientific">Leuconostoc mesenteroides subsp. mesenteroides (strain ATCC 8293 / DSM 20343 / BCRC 11652 / CCM 1803 / JCM 6124 / NCDO 523 / NBRC 100496 / NCIMB 8023 / NCTC 12954 / NRRL B-1118 / 37Y)</name>
    <dbReference type="NCBI Taxonomy" id="203120"/>
    <lineage>
        <taxon>Bacteria</taxon>
        <taxon>Bacillati</taxon>
        <taxon>Bacillota</taxon>
        <taxon>Bacilli</taxon>
        <taxon>Lactobacillales</taxon>
        <taxon>Lactobacillaceae</taxon>
        <taxon>Leuconostoc</taxon>
    </lineage>
</organism>